<accession>P93880</accession>
<dbReference type="EC" id="4.1.1.39" evidence="1"/>
<dbReference type="EMBL" id="Z70154">
    <property type="protein sequence ID" value="CAA94012.1"/>
    <property type="molecule type" value="Genomic_DNA"/>
</dbReference>
<dbReference type="SMR" id="P93880"/>
<dbReference type="GO" id="GO:0009507">
    <property type="term" value="C:chloroplast"/>
    <property type="evidence" value="ECO:0007669"/>
    <property type="project" value="UniProtKB-SubCell"/>
</dbReference>
<dbReference type="GO" id="GO:0000287">
    <property type="term" value="F:magnesium ion binding"/>
    <property type="evidence" value="ECO:0007669"/>
    <property type="project" value="InterPro"/>
</dbReference>
<dbReference type="GO" id="GO:0004497">
    <property type="term" value="F:monooxygenase activity"/>
    <property type="evidence" value="ECO:0007669"/>
    <property type="project" value="UniProtKB-KW"/>
</dbReference>
<dbReference type="GO" id="GO:0016984">
    <property type="term" value="F:ribulose-bisphosphate carboxylase activity"/>
    <property type="evidence" value="ECO:0007669"/>
    <property type="project" value="UniProtKB-EC"/>
</dbReference>
<dbReference type="GO" id="GO:0009853">
    <property type="term" value="P:photorespiration"/>
    <property type="evidence" value="ECO:0007669"/>
    <property type="project" value="UniProtKB-KW"/>
</dbReference>
<dbReference type="GO" id="GO:0019253">
    <property type="term" value="P:reductive pentose-phosphate cycle"/>
    <property type="evidence" value="ECO:0007669"/>
    <property type="project" value="UniProtKB-KW"/>
</dbReference>
<dbReference type="CDD" id="cd08212">
    <property type="entry name" value="RuBisCO_large_I"/>
    <property type="match status" value="1"/>
</dbReference>
<dbReference type="FunFam" id="3.20.20.110:FF:000001">
    <property type="entry name" value="Ribulose bisphosphate carboxylase large chain"/>
    <property type="match status" value="1"/>
</dbReference>
<dbReference type="FunFam" id="3.30.70.150:FF:000001">
    <property type="entry name" value="Ribulose bisphosphate carboxylase large chain"/>
    <property type="match status" value="1"/>
</dbReference>
<dbReference type="Gene3D" id="3.20.20.110">
    <property type="entry name" value="Ribulose bisphosphate carboxylase, large subunit, C-terminal domain"/>
    <property type="match status" value="1"/>
</dbReference>
<dbReference type="Gene3D" id="3.30.70.150">
    <property type="entry name" value="RuBisCO large subunit, N-terminal domain"/>
    <property type="match status" value="1"/>
</dbReference>
<dbReference type="HAMAP" id="MF_01338">
    <property type="entry name" value="RuBisCO_L_type1"/>
    <property type="match status" value="1"/>
</dbReference>
<dbReference type="InterPro" id="IPR033966">
    <property type="entry name" value="RuBisCO"/>
</dbReference>
<dbReference type="InterPro" id="IPR020878">
    <property type="entry name" value="RuBisCo_large_chain_AS"/>
</dbReference>
<dbReference type="InterPro" id="IPR000685">
    <property type="entry name" value="RuBisCO_lsu_C"/>
</dbReference>
<dbReference type="InterPro" id="IPR036376">
    <property type="entry name" value="RuBisCO_lsu_C_sf"/>
</dbReference>
<dbReference type="InterPro" id="IPR017443">
    <property type="entry name" value="RuBisCO_lsu_fd_N"/>
</dbReference>
<dbReference type="InterPro" id="IPR036422">
    <property type="entry name" value="RuBisCO_lsu_N_sf"/>
</dbReference>
<dbReference type="InterPro" id="IPR020888">
    <property type="entry name" value="RuBisCO_lsuI"/>
</dbReference>
<dbReference type="NCBIfam" id="NF003252">
    <property type="entry name" value="PRK04208.1"/>
    <property type="match status" value="1"/>
</dbReference>
<dbReference type="PANTHER" id="PTHR42704">
    <property type="entry name" value="RIBULOSE BISPHOSPHATE CARBOXYLASE"/>
    <property type="match status" value="1"/>
</dbReference>
<dbReference type="PANTHER" id="PTHR42704:SF15">
    <property type="entry name" value="RIBULOSE BISPHOSPHATE CARBOXYLASE LARGE CHAIN"/>
    <property type="match status" value="1"/>
</dbReference>
<dbReference type="Pfam" id="PF00016">
    <property type="entry name" value="RuBisCO_large"/>
    <property type="match status" value="1"/>
</dbReference>
<dbReference type="Pfam" id="PF02788">
    <property type="entry name" value="RuBisCO_large_N"/>
    <property type="match status" value="1"/>
</dbReference>
<dbReference type="SFLD" id="SFLDG01052">
    <property type="entry name" value="RuBisCO"/>
    <property type="match status" value="1"/>
</dbReference>
<dbReference type="SFLD" id="SFLDS00014">
    <property type="entry name" value="RuBisCO"/>
    <property type="match status" value="1"/>
</dbReference>
<dbReference type="SFLD" id="SFLDG00301">
    <property type="entry name" value="RuBisCO-like_proteins"/>
    <property type="match status" value="1"/>
</dbReference>
<dbReference type="SUPFAM" id="SSF51649">
    <property type="entry name" value="RuBisCo, C-terminal domain"/>
    <property type="match status" value="1"/>
</dbReference>
<dbReference type="SUPFAM" id="SSF54966">
    <property type="entry name" value="RuBisCO, large subunit, small (N-terminal) domain"/>
    <property type="match status" value="1"/>
</dbReference>
<dbReference type="PROSITE" id="PS00157">
    <property type="entry name" value="RUBISCO_LARGE"/>
    <property type="match status" value="1"/>
</dbReference>
<comment type="function">
    <text evidence="1">RuBisCO catalyzes two reactions: the carboxylation of D-ribulose 1,5-bisphosphate, the primary event in carbon dioxide fixation, as well as the oxidative fragmentation of the pentose substrate in the photorespiration process. Both reactions occur simultaneously and in competition at the same active site.</text>
</comment>
<comment type="catalytic activity">
    <reaction evidence="1">
        <text>2 (2R)-3-phosphoglycerate + 2 H(+) = D-ribulose 1,5-bisphosphate + CO2 + H2O</text>
        <dbReference type="Rhea" id="RHEA:23124"/>
        <dbReference type="ChEBI" id="CHEBI:15377"/>
        <dbReference type="ChEBI" id="CHEBI:15378"/>
        <dbReference type="ChEBI" id="CHEBI:16526"/>
        <dbReference type="ChEBI" id="CHEBI:57870"/>
        <dbReference type="ChEBI" id="CHEBI:58272"/>
        <dbReference type="EC" id="4.1.1.39"/>
    </reaction>
</comment>
<comment type="catalytic activity">
    <reaction evidence="1">
        <text>D-ribulose 1,5-bisphosphate + O2 = 2-phosphoglycolate + (2R)-3-phosphoglycerate + 2 H(+)</text>
        <dbReference type="Rhea" id="RHEA:36631"/>
        <dbReference type="ChEBI" id="CHEBI:15378"/>
        <dbReference type="ChEBI" id="CHEBI:15379"/>
        <dbReference type="ChEBI" id="CHEBI:57870"/>
        <dbReference type="ChEBI" id="CHEBI:58033"/>
        <dbReference type="ChEBI" id="CHEBI:58272"/>
    </reaction>
</comment>
<comment type="cofactor">
    <cofactor evidence="1">
        <name>Mg(2+)</name>
        <dbReference type="ChEBI" id="CHEBI:18420"/>
    </cofactor>
    <text evidence="1">Binds 1 Mg(2+) ion per subunit.</text>
</comment>
<comment type="subunit">
    <text evidence="1">Heterohexadecamer of 8 large chains and 8 small chains; disulfide-linked. The disulfide link is formed within the large subunit homodimers.</text>
</comment>
<comment type="subcellular location">
    <subcellularLocation>
        <location>Plastid</location>
        <location>Chloroplast</location>
    </subcellularLocation>
</comment>
<comment type="PTM">
    <text evidence="1">The disulfide bond which can form in the large chain dimeric partners within the hexadecamer appears to be associated with oxidative stress and protein turnover.</text>
</comment>
<comment type="miscellaneous">
    <text evidence="1">The basic functional RuBisCO is composed of a large chain homodimer in a 'head-to-tail' conformation. In form I RuBisCO this homodimer is arranged in a barrel-like tetramer with the small subunits forming a tetrameric 'cap' on each end of the 'barrel'.</text>
</comment>
<comment type="similarity">
    <text evidence="1">Belongs to the RuBisCO large chain family. Type I subfamily.</text>
</comment>
<gene>
    <name evidence="1" type="primary">rbcL</name>
</gene>
<feature type="chain" id="PRO_0000062397" description="Ribulose bisphosphate carboxylase large chain">
    <location>
        <begin position="1" status="less than"/>
        <end position="455" status="greater than"/>
    </location>
</feature>
<feature type="active site" description="Proton acceptor" evidence="1">
    <location>
        <position position="166"/>
    </location>
</feature>
<feature type="active site" description="Proton acceptor" evidence="1">
    <location>
        <position position="285"/>
    </location>
</feature>
<feature type="binding site" description="in homodimeric partner" evidence="1">
    <location>
        <position position="114"/>
    </location>
    <ligand>
        <name>substrate</name>
    </ligand>
</feature>
<feature type="binding site" evidence="1">
    <location>
        <position position="164"/>
    </location>
    <ligand>
        <name>substrate</name>
    </ligand>
</feature>
<feature type="binding site" evidence="1">
    <location>
        <position position="168"/>
    </location>
    <ligand>
        <name>substrate</name>
    </ligand>
</feature>
<feature type="binding site" description="via carbamate group" evidence="1">
    <location>
        <position position="192"/>
    </location>
    <ligand>
        <name>Mg(2+)</name>
        <dbReference type="ChEBI" id="CHEBI:18420"/>
    </ligand>
</feature>
<feature type="binding site" evidence="1">
    <location>
        <position position="194"/>
    </location>
    <ligand>
        <name>Mg(2+)</name>
        <dbReference type="ChEBI" id="CHEBI:18420"/>
    </ligand>
</feature>
<feature type="binding site" evidence="1">
    <location>
        <position position="195"/>
    </location>
    <ligand>
        <name>Mg(2+)</name>
        <dbReference type="ChEBI" id="CHEBI:18420"/>
    </ligand>
</feature>
<feature type="binding site" evidence="1">
    <location>
        <position position="286"/>
    </location>
    <ligand>
        <name>substrate</name>
    </ligand>
</feature>
<feature type="binding site" evidence="1">
    <location>
        <position position="318"/>
    </location>
    <ligand>
        <name>substrate</name>
    </ligand>
</feature>
<feature type="binding site" evidence="1">
    <location>
        <position position="370"/>
    </location>
    <ligand>
        <name>substrate</name>
    </ligand>
</feature>
<feature type="site" description="Transition state stabilizer" evidence="1">
    <location>
        <position position="325"/>
    </location>
</feature>
<feature type="modified residue" description="N6,N6,N6-trimethyllysine" evidence="1">
    <location>
        <position position="5"/>
    </location>
</feature>
<feature type="modified residue" description="N6-carboxylysine" evidence="1">
    <location>
        <position position="192"/>
    </location>
</feature>
<feature type="disulfide bond" description="Interchain; in linked form" evidence="1">
    <location>
        <position position="238"/>
    </location>
</feature>
<feature type="non-terminal residue">
    <location>
        <position position="1"/>
    </location>
</feature>
<feature type="non-terminal residue">
    <location>
        <position position="455"/>
    </location>
</feature>
<proteinExistence type="inferred from homology"/>
<protein>
    <recommendedName>
        <fullName evidence="1">Ribulose bisphosphate carboxylase large chain</fullName>
        <shortName evidence="1">RuBisCO large subunit</shortName>
        <ecNumber evidence="1">4.1.1.39</ecNumber>
    </recommendedName>
</protein>
<keyword id="KW-0113">Calvin cycle</keyword>
<keyword id="KW-0120">Carbon dioxide fixation</keyword>
<keyword id="KW-0150">Chloroplast</keyword>
<keyword id="KW-1015">Disulfide bond</keyword>
<keyword id="KW-0456">Lyase</keyword>
<keyword id="KW-0460">Magnesium</keyword>
<keyword id="KW-0479">Metal-binding</keyword>
<keyword id="KW-0488">Methylation</keyword>
<keyword id="KW-0503">Monooxygenase</keyword>
<keyword id="KW-0560">Oxidoreductase</keyword>
<keyword id="KW-0601">Photorespiration</keyword>
<keyword id="KW-0602">Photosynthesis</keyword>
<keyword id="KW-0934">Plastid</keyword>
<reference key="1">
    <citation type="thesis" date="1995" institute="Universitaet Heidelberg" country="Germany">
        <authorList>
            <person name="Kaess E."/>
        </authorList>
    </citation>
    <scope>NUCLEOTIDE SEQUENCE [GENOMIC DNA]</scope>
    <source>
        <tissue>Leaf</tissue>
    </source>
</reference>
<sequence>SVGFKAGVKDYKLTYYTPDYETKDTDILAAFRVTPQPGVPPEEAGAAVAAESSTGTWTTVWTDGLTSLDRYKGRCYHIEPVAGEENQYIAYVAYPLDLFEEGSVTNMFTSIVGNVFGFKALRALRLEDLRIPTSYTKTFQGPPHGIQVERDKLNKYGRPLLGCTIKPKLGLSAKNYGRAVYECLRGGLDFTKDDENVNSQPFMRWRDRFLFCAEAIFKAQAETGEIKGHYLNATAGTCEEMMKRAVFARELGVPIVMHDYLTGGFTANTSLSHYCRDNGLLLHIHRAMHAVIDRQKNHGMHFRVLAKALRLSGGDHIHAGTVVGKLEGEREITLGFVDLLRDDFIEKDRSRGIYFTQDWVSLPGVLPVASGGIHVWHMPALTEIFGDDSVLQFGGGTLGHPWGNAPGAVANRVALEACVQARNEGRDLAREGNEIIREASKWSPELAAACEVWKE</sequence>
<geneLocation type="chloroplast"/>
<organism>
    <name type="scientific">Senna didymobotrya</name>
    <name type="common">Popcorn cassia</name>
    <name type="synonym">Cassia didymobotrya</name>
    <dbReference type="NCBI Taxonomy" id="72401"/>
    <lineage>
        <taxon>Eukaryota</taxon>
        <taxon>Viridiplantae</taxon>
        <taxon>Streptophyta</taxon>
        <taxon>Embryophyta</taxon>
        <taxon>Tracheophyta</taxon>
        <taxon>Spermatophyta</taxon>
        <taxon>Magnoliopsida</taxon>
        <taxon>eudicotyledons</taxon>
        <taxon>Gunneridae</taxon>
        <taxon>Pentapetalae</taxon>
        <taxon>rosids</taxon>
        <taxon>fabids</taxon>
        <taxon>Fabales</taxon>
        <taxon>Fabaceae</taxon>
        <taxon>Caesalpinioideae</taxon>
        <taxon>Cassia clade</taxon>
        <taxon>Senna</taxon>
    </lineage>
</organism>
<evidence type="ECO:0000255" key="1">
    <source>
        <dbReference type="HAMAP-Rule" id="MF_01338"/>
    </source>
</evidence>
<name>RBL_SENDI</name>